<dbReference type="EMBL" id="D26532">
    <property type="protein sequence ID" value="BAA05535.1"/>
    <property type="molecule type" value="mRNA"/>
</dbReference>
<dbReference type="EMBL" id="D13802">
    <property type="protein sequence ID" value="BAA02960.1"/>
    <property type="molecule type" value="mRNA"/>
</dbReference>
<dbReference type="EMBL" id="X97306">
    <property type="protein sequence ID" value="CAA65976.1"/>
    <property type="molecule type" value="mRNA"/>
</dbReference>
<dbReference type="EMBL" id="AB046930">
    <property type="protein sequence ID" value="BAB08105.1"/>
    <property type="molecule type" value="mRNA"/>
</dbReference>
<dbReference type="EMBL" id="AF345649">
    <property type="protein sequence ID" value="AAK29784.1"/>
    <property type="molecule type" value="mRNA"/>
</dbReference>
<dbReference type="EMBL" id="AF193030">
    <property type="protein sequence ID" value="AAG32957.1"/>
    <property type="molecule type" value="Genomic_DNA"/>
</dbReference>
<dbReference type="CCDS" id="CCDS28339.1">
    <molecule id="Q03347-2"/>
</dbReference>
<dbReference type="CCDS" id="CCDS49916.1">
    <molecule id="Q03347-1"/>
</dbReference>
<dbReference type="CCDS" id="CCDS49917.1">
    <molecule id="Q03347-4"/>
</dbReference>
<dbReference type="PIR" id="A56017">
    <property type="entry name" value="A56017"/>
</dbReference>
<dbReference type="PDB" id="1EAN">
    <property type="method" value="X-ray"/>
    <property type="resolution" value="1.70 A"/>
    <property type="chains" value="A=46-185"/>
</dbReference>
<dbReference type="PDB" id="1EAO">
    <property type="method" value="X-ray"/>
    <property type="resolution" value="1.40 A"/>
    <property type="chains" value="A/B=46-185"/>
</dbReference>
<dbReference type="PDB" id="1EAQ">
    <property type="method" value="X-ray"/>
    <property type="resolution" value="1.25 A"/>
    <property type="chains" value="A/B=46-185"/>
</dbReference>
<dbReference type="PDB" id="1HJB">
    <property type="method" value="X-ray"/>
    <property type="resolution" value="3.00 A"/>
    <property type="chains" value="C/F=60-182"/>
</dbReference>
<dbReference type="PDB" id="1HJC">
    <property type="method" value="X-ray"/>
    <property type="resolution" value="2.65 A"/>
    <property type="chains" value="A/D=60-182"/>
</dbReference>
<dbReference type="PDB" id="1IO4">
    <property type="method" value="X-ray"/>
    <property type="resolution" value="3.00 A"/>
    <property type="chains" value="C=60-182"/>
</dbReference>
<dbReference type="PDB" id="2J6W">
    <property type="method" value="X-ray"/>
    <property type="resolution" value="2.60 A"/>
    <property type="chains" value="A/B=46-185"/>
</dbReference>
<dbReference type="PDB" id="3WTS">
    <property type="method" value="X-ray"/>
    <property type="resolution" value="2.35 A"/>
    <property type="chains" value="A/F=60-263"/>
</dbReference>
<dbReference type="PDB" id="3WTT">
    <property type="method" value="X-ray"/>
    <property type="resolution" value="2.35 A"/>
    <property type="chains" value="A/F=60-263"/>
</dbReference>
<dbReference type="PDB" id="3WTU">
    <property type="method" value="X-ray"/>
    <property type="resolution" value="2.70 A"/>
    <property type="chains" value="A/F=60-263"/>
</dbReference>
<dbReference type="PDB" id="3WTV">
    <property type="method" value="X-ray"/>
    <property type="resolution" value="2.70 A"/>
    <property type="chains" value="A/F=60-263"/>
</dbReference>
<dbReference type="PDB" id="3WTW">
    <property type="method" value="X-ray"/>
    <property type="resolution" value="2.90 A"/>
    <property type="chains" value="A/F=60-263"/>
</dbReference>
<dbReference type="PDB" id="3WTX">
    <property type="method" value="X-ray"/>
    <property type="resolution" value="2.80 A"/>
    <property type="chains" value="A/F=60-263"/>
</dbReference>
<dbReference type="PDB" id="3WTY">
    <property type="method" value="X-ray"/>
    <property type="resolution" value="2.70 A"/>
    <property type="chains" value="A/F=60-263"/>
</dbReference>
<dbReference type="PDB" id="3WU1">
    <property type="method" value="X-ray"/>
    <property type="resolution" value="2.40 A"/>
    <property type="chains" value="A=55-177"/>
</dbReference>
<dbReference type="PDB" id="4L0Y">
    <property type="method" value="X-ray"/>
    <property type="resolution" value="2.50 A"/>
    <property type="chains" value="A=1-242"/>
</dbReference>
<dbReference type="PDB" id="4L0Z">
    <property type="method" value="X-ray"/>
    <property type="resolution" value="2.70 A"/>
    <property type="chains" value="A=1-242"/>
</dbReference>
<dbReference type="PDB" id="4L18">
    <property type="method" value="X-ray"/>
    <property type="resolution" value="2.30 A"/>
    <property type="chains" value="A/E=48-214"/>
</dbReference>
<dbReference type="PDBsum" id="1EAN"/>
<dbReference type="PDBsum" id="1EAO"/>
<dbReference type="PDBsum" id="1EAQ"/>
<dbReference type="PDBsum" id="1HJB"/>
<dbReference type="PDBsum" id="1HJC"/>
<dbReference type="PDBsum" id="1IO4"/>
<dbReference type="PDBsum" id="2J6W"/>
<dbReference type="PDBsum" id="3WTS"/>
<dbReference type="PDBsum" id="3WTT"/>
<dbReference type="PDBsum" id="3WTU"/>
<dbReference type="PDBsum" id="3WTV"/>
<dbReference type="PDBsum" id="3WTW"/>
<dbReference type="PDBsum" id="3WTX"/>
<dbReference type="PDBsum" id="3WTY"/>
<dbReference type="PDBsum" id="3WU1"/>
<dbReference type="PDBsum" id="4L0Y"/>
<dbReference type="PDBsum" id="4L0Z"/>
<dbReference type="PDBsum" id="4L18"/>
<dbReference type="SMR" id="Q03347"/>
<dbReference type="DIP" id="DIP-40723N"/>
<dbReference type="ELM" id="Q03347"/>
<dbReference type="FunCoup" id="Q03347">
    <property type="interactions" value="735"/>
</dbReference>
<dbReference type="IntAct" id="Q03347">
    <property type="interactions" value="5"/>
</dbReference>
<dbReference type="MINT" id="Q03347"/>
<dbReference type="STRING" id="10090.ENSMUSP00000023673"/>
<dbReference type="GlyGen" id="Q03347">
    <property type="glycosylation" value="1 site"/>
</dbReference>
<dbReference type="iPTMnet" id="Q03347"/>
<dbReference type="PhosphoSitePlus" id="Q03347"/>
<dbReference type="jPOST" id="Q03347"/>
<dbReference type="PaxDb" id="10090-ENSMUSP00000023673"/>
<dbReference type="PeptideAtlas" id="Q03347"/>
<dbReference type="ProteomicsDB" id="256647">
    <molecule id="Q03347-1"/>
</dbReference>
<dbReference type="ProteomicsDB" id="256648">
    <molecule id="Q03347-2"/>
</dbReference>
<dbReference type="ProteomicsDB" id="256649">
    <molecule id="Q03347-3"/>
</dbReference>
<dbReference type="ProteomicsDB" id="256650">
    <molecule id="Q03347-4"/>
</dbReference>
<dbReference type="ProteomicsDB" id="256651">
    <molecule id="Q03347-5"/>
</dbReference>
<dbReference type="AGR" id="MGI:99852"/>
<dbReference type="MGI" id="MGI:99852">
    <property type="gene designation" value="Runx1"/>
</dbReference>
<dbReference type="eggNOG" id="KOG3982">
    <property type="taxonomic scope" value="Eukaryota"/>
</dbReference>
<dbReference type="InParanoid" id="Q03347"/>
<dbReference type="PhylomeDB" id="Q03347"/>
<dbReference type="Reactome" id="R-MMU-549127">
    <property type="pathway name" value="Organic cation transport"/>
</dbReference>
<dbReference type="Reactome" id="R-MMU-8877330">
    <property type="pathway name" value="RUNX1 and FOXP3 control the development of regulatory T lymphocytes (Tregs)"/>
</dbReference>
<dbReference type="Reactome" id="R-MMU-8931987">
    <property type="pathway name" value="RUNX1 regulates estrogen receptor mediated transcription"/>
</dbReference>
<dbReference type="Reactome" id="R-MMU-8934593">
    <property type="pathway name" value="Regulation of RUNX1 Expression and Activity"/>
</dbReference>
<dbReference type="Reactome" id="R-MMU-8936459">
    <property type="pathway name" value="RUNX1 regulates genes involved in megakaryocyte differentiation and platelet function"/>
</dbReference>
<dbReference type="Reactome" id="R-MMU-8939236">
    <property type="pathway name" value="RUNX1 regulates transcription of genes involved in differentiation of HSCs"/>
</dbReference>
<dbReference type="Reactome" id="R-MMU-8939243">
    <property type="pathway name" value="RUNX1 interacts with co-factors whose precise effect on RUNX1 targets is not known"/>
</dbReference>
<dbReference type="Reactome" id="R-MMU-8939245">
    <property type="pathway name" value="RUNX1 regulates transcription of genes involved in BCR signaling"/>
</dbReference>
<dbReference type="Reactome" id="R-MMU-8939246">
    <property type="pathway name" value="RUNX1 regulates transcription of genes involved in differentiation of myeloid cells"/>
</dbReference>
<dbReference type="Reactome" id="R-MMU-8939247">
    <property type="pathway name" value="RUNX1 regulates transcription of genes involved in interleukin signaling"/>
</dbReference>
<dbReference type="Reactome" id="R-MMU-9018519">
    <property type="pathway name" value="Estrogen-dependent gene expression"/>
</dbReference>
<dbReference type="ChiTaRS" id="Runx1">
    <property type="organism name" value="mouse"/>
</dbReference>
<dbReference type="EvolutionaryTrace" id="Q03347"/>
<dbReference type="PRO" id="PR:Q03347"/>
<dbReference type="Proteomes" id="UP000000589">
    <property type="component" value="Unplaced"/>
</dbReference>
<dbReference type="RNAct" id="Q03347">
    <property type="molecule type" value="protein"/>
</dbReference>
<dbReference type="GO" id="GO:0005604">
    <property type="term" value="C:basement membrane"/>
    <property type="evidence" value="ECO:0000314"/>
    <property type="project" value="MGI"/>
</dbReference>
<dbReference type="GO" id="GO:0016513">
    <property type="term" value="C:core-binding factor complex"/>
    <property type="evidence" value="ECO:0000304"/>
    <property type="project" value="UniProtKB"/>
</dbReference>
<dbReference type="GO" id="GO:0005654">
    <property type="term" value="C:nucleoplasm"/>
    <property type="evidence" value="ECO:0000304"/>
    <property type="project" value="Reactome"/>
</dbReference>
<dbReference type="GO" id="GO:0005634">
    <property type="term" value="C:nucleus"/>
    <property type="evidence" value="ECO:0000314"/>
    <property type="project" value="UniProtKB"/>
</dbReference>
<dbReference type="GO" id="GO:0032991">
    <property type="term" value="C:protein-containing complex"/>
    <property type="evidence" value="ECO:0000266"/>
    <property type="project" value="MGI"/>
</dbReference>
<dbReference type="GO" id="GO:0005524">
    <property type="term" value="F:ATP binding"/>
    <property type="evidence" value="ECO:0007669"/>
    <property type="project" value="InterPro"/>
</dbReference>
<dbReference type="GO" id="GO:0003677">
    <property type="term" value="F:DNA binding"/>
    <property type="evidence" value="ECO:0000314"/>
    <property type="project" value="UniProtKB"/>
</dbReference>
<dbReference type="GO" id="GO:0003700">
    <property type="term" value="F:DNA-binding transcription factor activity"/>
    <property type="evidence" value="ECO:0000314"/>
    <property type="project" value="MGI"/>
</dbReference>
<dbReference type="GO" id="GO:0140297">
    <property type="term" value="F:DNA-binding transcription factor binding"/>
    <property type="evidence" value="ECO:0000353"/>
    <property type="project" value="ARUK-UCL"/>
</dbReference>
<dbReference type="GO" id="GO:0000978">
    <property type="term" value="F:RNA polymerase II cis-regulatory region sequence-specific DNA binding"/>
    <property type="evidence" value="ECO:0000314"/>
    <property type="project" value="UniProtKB"/>
</dbReference>
<dbReference type="GO" id="GO:0048266">
    <property type="term" value="P:behavioral response to pain"/>
    <property type="evidence" value="ECO:0000315"/>
    <property type="project" value="MGI"/>
</dbReference>
<dbReference type="GO" id="GO:0071560">
    <property type="term" value="P:cellular response to transforming growth factor beta stimulus"/>
    <property type="evidence" value="ECO:0000314"/>
    <property type="project" value="MGI"/>
</dbReference>
<dbReference type="GO" id="GO:0007417">
    <property type="term" value="P:central nervous system development"/>
    <property type="evidence" value="ECO:0000315"/>
    <property type="project" value="MGI"/>
</dbReference>
<dbReference type="GO" id="GO:0021953">
    <property type="term" value="P:central nervous system neuron differentiation"/>
    <property type="evidence" value="ECO:0000315"/>
    <property type="project" value="MGI"/>
</dbReference>
<dbReference type="GO" id="GO:0060216">
    <property type="term" value="P:definitive hemopoiesis"/>
    <property type="evidence" value="ECO:0000315"/>
    <property type="project" value="MGI"/>
</dbReference>
<dbReference type="GO" id="GO:0035162">
    <property type="term" value="P:embryonic hemopoiesis"/>
    <property type="evidence" value="ECO:0000315"/>
    <property type="project" value="MGI"/>
</dbReference>
<dbReference type="GO" id="GO:0010467">
    <property type="term" value="P:gene expression"/>
    <property type="evidence" value="ECO:0000250"/>
    <property type="project" value="MGI"/>
</dbReference>
<dbReference type="GO" id="GO:0031069">
    <property type="term" value="P:hair follicle morphogenesis"/>
    <property type="evidence" value="ECO:0000315"/>
    <property type="project" value="MGI"/>
</dbReference>
<dbReference type="GO" id="GO:0030097">
    <property type="term" value="P:hemopoiesis"/>
    <property type="evidence" value="ECO:0000304"/>
    <property type="project" value="UniProtKB"/>
</dbReference>
<dbReference type="GO" id="GO:0001701">
    <property type="term" value="P:in utero embryonic development"/>
    <property type="evidence" value="ECO:0000315"/>
    <property type="project" value="MGI"/>
</dbReference>
<dbReference type="GO" id="GO:0001889">
    <property type="term" value="P:liver development"/>
    <property type="evidence" value="ECO:0000315"/>
    <property type="project" value="MGI"/>
</dbReference>
<dbReference type="GO" id="GO:0002318">
    <property type="term" value="P:myeloid progenitor cell differentiation"/>
    <property type="evidence" value="ECO:0000315"/>
    <property type="project" value="MGI"/>
</dbReference>
<dbReference type="GO" id="GO:0043371">
    <property type="term" value="P:negative regulation of CD4-positive, alpha-beta T cell differentiation"/>
    <property type="evidence" value="ECO:0000314"/>
    <property type="project" value="UniProtKB"/>
</dbReference>
<dbReference type="GO" id="GO:0008285">
    <property type="term" value="P:negative regulation of cell population proliferation"/>
    <property type="evidence" value="ECO:0000315"/>
    <property type="project" value="MGI"/>
</dbReference>
<dbReference type="GO" id="GO:0045892">
    <property type="term" value="P:negative regulation of DNA-templated transcription"/>
    <property type="evidence" value="ECO:0000314"/>
    <property type="project" value="UniProtKB"/>
</dbReference>
<dbReference type="GO" id="GO:0000122">
    <property type="term" value="P:negative regulation of transcription by RNA polymerase II"/>
    <property type="evidence" value="ECO:0000314"/>
    <property type="project" value="UniProtKB"/>
</dbReference>
<dbReference type="GO" id="GO:0048666">
    <property type="term" value="P:neuron development"/>
    <property type="evidence" value="ECO:0000315"/>
    <property type="project" value="MGI"/>
</dbReference>
<dbReference type="GO" id="GO:0030182">
    <property type="term" value="P:neuron differentiation"/>
    <property type="evidence" value="ECO:0000315"/>
    <property type="project" value="MGI"/>
</dbReference>
<dbReference type="GO" id="GO:0048663">
    <property type="term" value="P:neuron fate commitment"/>
    <property type="evidence" value="ECO:0000315"/>
    <property type="project" value="MGI"/>
</dbReference>
<dbReference type="GO" id="GO:0045766">
    <property type="term" value="P:positive regulation of angiogenesis"/>
    <property type="evidence" value="ECO:0000315"/>
    <property type="project" value="UniProtKB"/>
</dbReference>
<dbReference type="GO" id="GO:0043378">
    <property type="term" value="P:positive regulation of CD8-positive, alpha-beta T cell differentiation"/>
    <property type="evidence" value="ECO:0000314"/>
    <property type="project" value="UniProtKB"/>
</dbReference>
<dbReference type="GO" id="GO:1903431">
    <property type="term" value="P:positive regulation of cell maturation"/>
    <property type="evidence" value="ECO:0000315"/>
    <property type="project" value="MGI"/>
</dbReference>
<dbReference type="GO" id="GO:0045893">
    <property type="term" value="P:positive regulation of DNA-templated transcription"/>
    <property type="evidence" value="ECO:0000314"/>
    <property type="project" value="UniProtKB"/>
</dbReference>
<dbReference type="GO" id="GO:0030854">
    <property type="term" value="P:positive regulation of granulocyte differentiation"/>
    <property type="evidence" value="ECO:0000250"/>
    <property type="project" value="UniProtKB"/>
</dbReference>
<dbReference type="GO" id="GO:0032743">
    <property type="term" value="P:positive regulation of interleukin-2 production"/>
    <property type="evidence" value="ECO:0000315"/>
    <property type="project" value="UniProtKB"/>
</dbReference>
<dbReference type="GO" id="GO:0045944">
    <property type="term" value="P:positive regulation of transcription by RNA polymerase II"/>
    <property type="evidence" value="ECO:0000314"/>
    <property type="project" value="MGI"/>
</dbReference>
<dbReference type="GO" id="GO:0032729">
    <property type="term" value="P:positive regulation of type II interferon production"/>
    <property type="evidence" value="ECO:0000314"/>
    <property type="project" value="UniProtKB"/>
</dbReference>
<dbReference type="GO" id="GO:0006355">
    <property type="term" value="P:regulation of DNA-templated transcription"/>
    <property type="evidence" value="ECO:0000314"/>
    <property type="project" value="MGI"/>
</dbReference>
<dbReference type="GO" id="GO:0071336">
    <property type="term" value="P:regulation of hair follicle cell proliferation"/>
    <property type="evidence" value="ECO:0000315"/>
    <property type="project" value="MGI"/>
</dbReference>
<dbReference type="GO" id="GO:0009966">
    <property type="term" value="P:regulation of signal transduction"/>
    <property type="evidence" value="ECO:0000315"/>
    <property type="project" value="MGI"/>
</dbReference>
<dbReference type="GO" id="GO:0002667">
    <property type="term" value="P:regulation of T cell anergy"/>
    <property type="evidence" value="ECO:0000315"/>
    <property type="project" value="UniProtKB"/>
</dbReference>
<dbReference type="GO" id="GO:0032526">
    <property type="term" value="P:response to retinoic acid"/>
    <property type="evidence" value="ECO:0000314"/>
    <property type="project" value="BHF-UCL"/>
</dbReference>
<dbReference type="GO" id="GO:0001501">
    <property type="term" value="P:skeletal system development"/>
    <property type="evidence" value="ECO:0000315"/>
    <property type="project" value="MGI"/>
</dbReference>
<dbReference type="FunFam" id="2.60.40.720:FF:000001">
    <property type="entry name" value="Runt-related transcription factor"/>
    <property type="match status" value="1"/>
</dbReference>
<dbReference type="FunFam" id="4.10.770.10:FF:000002">
    <property type="entry name" value="Runt-related transcription factor"/>
    <property type="match status" value="1"/>
</dbReference>
<dbReference type="Gene3D" id="2.60.40.720">
    <property type="match status" value="1"/>
</dbReference>
<dbReference type="Gene3D" id="4.10.770.10">
    <property type="entry name" value="Signal Protein Aml-1b, Chain A, domain 3"/>
    <property type="match status" value="1"/>
</dbReference>
<dbReference type="InterPro" id="IPR000040">
    <property type="entry name" value="AML1_Runt"/>
</dbReference>
<dbReference type="InterPro" id="IPR008967">
    <property type="entry name" value="p53-like_TF_DNA-bd_sf"/>
</dbReference>
<dbReference type="InterPro" id="IPR012346">
    <property type="entry name" value="p53/RUNT-type_TF_DNA-bd_sf"/>
</dbReference>
<dbReference type="InterPro" id="IPR013524">
    <property type="entry name" value="Runt_dom"/>
</dbReference>
<dbReference type="InterPro" id="IPR027384">
    <property type="entry name" value="Runx_central_dom_sf"/>
</dbReference>
<dbReference type="InterPro" id="IPR013711">
    <property type="entry name" value="RunxI_C_dom"/>
</dbReference>
<dbReference type="InterPro" id="IPR016554">
    <property type="entry name" value="TF_Runt-rel_RUNX"/>
</dbReference>
<dbReference type="PANTHER" id="PTHR11950">
    <property type="entry name" value="RUNT RELATED"/>
    <property type="match status" value="1"/>
</dbReference>
<dbReference type="PANTHER" id="PTHR11950:SF40">
    <property type="entry name" value="RUNT-RELATED TRANSCRIPTION FACTOR 1"/>
    <property type="match status" value="1"/>
</dbReference>
<dbReference type="Pfam" id="PF00853">
    <property type="entry name" value="Runt"/>
    <property type="match status" value="1"/>
</dbReference>
<dbReference type="Pfam" id="PF08504">
    <property type="entry name" value="RunxI"/>
    <property type="match status" value="1"/>
</dbReference>
<dbReference type="PIRSF" id="PIRSF009374">
    <property type="entry name" value="TF_Runt-rel_RUNX"/>
    <property type="match status" value="1"/>
</dbReference>
<dbReference type="PRINTS" id="PR00967">
    <property type="entry name" value="ONCOGENEAML1"/>
</dbReference>
<dbReference type="SUPFAM" id="SSF49417">
    <property type="entry name" value="p53-like transcription factors"/>
    <property type="match status" value="1"/>
</dbReference>
<dbReference type="PROSITE" id="PS51062">
    <property type="entry name" value="RUNT"/>
    <property type="match status" value="1"/>
</dbReference>
<reference key="1">
    <citation type="journal article" date="1993" name="Oncogene">
        <title>Isolation of PEBP2 alpha B cDNA representing the mouse homolog of human acute myeloid leukemia gene, AML1.</title>
        <authorList>
            <person name="Bae S.-C."/>
            <person name="Yamaguchi-Iwai Y."/>
            <person name="Ogawa E."/>
            <person name="Maruyama M."/>
            <person name="Inuzuka M."/>
            <person name="Kagoshima H."/>
            <person name="Shigesada K."/>
            <person name="Satake M."/>
            <person name="Ito Y."/>
        </authorList>
    </citation>
    <scope>NUCLEOTIDE SEQUENCE [MRNA] (ISOFORM 1)</scope>
    <source>
        <tissue>Fibroblast</tissue>
    </source>
</reference>
<reference key="2">
    <citation type="journal article" date="1994" name="Mol. Cell. Biol.">
        <title>PEBP2 alpha B/mouse AML1 consists of multiple isoforms that possess differential transactivation potentials.</title>
        <authorList>
            <person name="Bae S.-C."/>
            <person name="Ogawa E."/>
            <person name="Maruyama M."/>
            <person name="Oka H."/>
            <person name="Satake M."/>
            <person name="Shigesada K."/>
            <person name="Jenkins N.A."/>
            <person name="Gilbert D.J."/>
            <person name="Copeland N.G."/>
            <person name="Ito Y."/>
        </authorList>
    </citation>
    <scope>NUCLEOTIDE SEQUENCE [MRNA] (ISOFORM 2)</scope>
    <source>
        <tissue>Fibroblast</tissue>
    </source>
</reference>
<reference key="3">
    <citation type="submission" date="1996-04" db="EMBL/GenBank/DDBJ databases">
        <authorList>
            <person name="Calabi F."/>
        </authorList>
    </citation>
    <scope>NUCLEOTIDE SEQUENCE [MRNA] (ISOFORM 3)</scope>
    <source>
        <strain>BALB/cJ</strain>
        <tissue>Thymus</tissue>
    </source>
</reference>
<reference key="4">
    <citation type="journal article" date="2000" name="Biochem. Biophys. Res. Commun.">
        <title>Identification and expression of a novel 3'-exon of mouse Runx1/Pebp2alphaB/Cbfa2/AML1 gene.</title>
        <authorList>
            <person name="Tsuji K."/>
            <person name="Noda M."/>
        </authorList>
    </citation>
    <scope>PARTIAL NUCLEOTIDE SEQUENCE [MRNA] (ISOFORM 5)</scope>
</reference>
<reference key="5">
    <citation type="journal article" date="2001" name="Biochem. Biophys. Res. Commun.">
        <title>Identification of an alternatively spliced form of the mouse AML1/RUNX1 gene transcript AML1c and its expression in early hematopoietic development.</title>
        <authorList>
            <person name="Fujita Y."/>
            <person name="Nishimura M."/>
            <person name="Taniwaki M."/>
            <person name="Abe T."/>
            <person name="Okuda T."/>
        </authorList>
    </citation>
    <scope>PARTIAL NUCLEOTIDE SEQUENCE [MRNA] (ISOFORM 4)</scope>
    <source>
        <strain>129/Ola</strain>
        <tissue>Embryo</tissue>
    </source>
</reference>
<reference key="6">
    <citation type="journal article" date="2001" name="Dev. Biol.">
        <title>Expression and function of a stem cell promoter for the murine CBFalpha2 gene: distinct roles and regulation in natural killer and T cell development.</title>
        <authorList>
            <person name="Telfer J.C."/>
            <person name="Rothenberg E.V."/>
        </authorList>
    </citation>
    <scope>PARTIAL NUCLEOTIDE SEQUENCE [GENOMIC DNA]</scope>
    <scope>ALTERNATIVE SPLICING (ISOFORM 4)</scope>
    <scope>FUNCTION (ISOFORM 4)</scope>
    <source>
        <strain>C57BL/6J</strain>
        <tissue>Thymus</tissue>
    </source>
</reference>
<reference key="7">
    <citation type="journal article" date="1996" name="Cell">
        <title>AML1, the target of multiple chromosomal translocations in human leukemia, is essential for normal fetal liver hematopoiesis.</title>
        <authorList>
            <person name="Okuda T."/>
            <person name="van Deursen J."/>
            <person name="Hiebert S.W."/>
            <person name="Grosveld G."/>
            <person name="Downing J.R."/>
        </authorList>
    </citation>
    <scope>FUNCTION IN LIVER HEMATOPOIESIS</scope>
</reference>
<reference key="8">
    <citation type="journal article" date="2007" name="Nature">
        <title>Foxp3 controls regulatory T-cell function by interacting with AML1/Runx1.</title>
        <authorList>
            <person name="Ono M."/>
            <person name="Yaguchi H."/>
            <person name="Ohkura N."/>
            <person name="Kitabayashi I."/>
            <person name="Nagamura Y."/>
            <person name="Nomura T."/>
            <person name="Miyachi Y."/>
            <person name="Tsukada T."/>
            <person name="Sakaguchi S."/>
        </authorList>
    </citation>
    <scope>FUNCTION</scope>
    <scope>INTERACTION WITH FOXP3</scope>
    <scope>SUBCELLULAR LOCATION</scope>
</reference>
<reference key="9">
    <citation type="journal article" date="2010" name="Cell">
        <title>A tissue-specific atlas of mouse protein phosphorylation and expression.</title>
        <authorList>
            <person name="Huttlin E.L."/>
            <person name="Jedrychowski M.P."/>
            <person name="Elias J.E."/>
            <person name="Goswami T."/>
            <person name="Rad R."/>
            <person name="Beausoleil S.A."/>
            <person name="Villen J."/>
            <person name="Haas W."/>
            <person name="Sowa M.E."/>
            <person name="Gygi S.P."/>
        </authorList>
    </citation>
    <scope>IDENTIFICATION BY MASS SPECTROMETRY [LARGE SCALE ANALYSIS]</scope>
    <source>
        <tissue>Lung</tissue>
    </source>
</reference>
<reference key="10">
    <citation type="journal article" date="2011" name="Nat. Immunol.">
        <title>T-bet represses T(H)17 differentiation by preventing Runx1-mediated activation of the gene encoding RORgammat.</title>
        <authorList>
            <person name="Lazarevic V."/>
            <person name="Chen X."/>
            <person name="Shim J.H."/>
            <person name="Hwang E.S."/>
            <person name="Jang E."/>
            <person name="Bolm A.N."/>
            <person name="Oukka M."/>
            <person name="Kuchroo V.K."/>
            <person name="Glimcher L.H."/>
        </authorList>
    </citation>
    <scope>FUNCTION</scope>
    <scope>INTERACTION WITH TBX21</scope>
</reference>
<reference key="11">
    <citation type="journal article" date="2012" name="Cell Death Differ.">
        <title>The histone- and PRMT5-associated protein COPR5 is required for myogenic differentiation.</title>
        <authorList>
            <person name="Paul C."/>
            <person name="Sardet C."/>
            <person name="Fabbrizio E."/>
        </authorList>
    </citation>
    <scope>IDENTIFICATION IN A COMPLEX WITH PRMT5; RUNX1 AND CBFB</scope>
</reference>
<reference key="12">
    <citation type="journal article" date="1996" name="Proc. Natl. Acad. Sci. U.S.A.">
        <title>Disruption of the Cbfa2 gene causes necrosis and hemorrhaging in the central nervous system and blocks definitive hematopoiesis.</title>
        <authorList>
            <person name="Wang Q."/>
            <person name="Stacy T."/>
            <person name="Binder M."/>
            <person name="Marin-Padilla M."/>
            <person name="Sharpe A.H."/>
            <person name="Speck N.A."/>
        </authorList>
    </citation>
    <scope>FUNCTION IN NECROSIS AND HEMORRHAGING</scope>
</reference>
<reference key="13">
    <citation type="journal article" date="2006" name="EMBO J.">
        <title>Roles of HIPK1 and HIPK2 in AML1- and p300-dependent transcription, hematopoiesis and blood vessel formation.</title>
        <authorList>
            <person name="Aikawa Y."/>
            <person name="Nguyen L.A."/>
            <person name="Isono K."/>
            <person name="Takakura N."/>
            <person name="Tagata Y."/>
            <person name="Schmitz M.L."/>
            <person name="Koseki H."/>
            <person name="Kitabayashi I."/>
        </authorList>
    </citation>
    <scope>INTERACTION WITH HIPK2</scope>
    <scope>PHOSPHORYLATION AT SER-249 AND SER-276 BY HIPK2</scope>
    <scope>MUTAGENESIS OF SER-249 AND SER-276</scope>
</reference>
<reference key="14">
    <citation type="journal article" date="2008" name="Science">
        <title>Repression of the transcription factor Th-POK by Runx complexes in cytotoxic T cell development.</title>
        <authorList>
            <person name="Setoguchi R."/>
            <person name="Tachibana M."/>
            <person name="Naoe Y."/>
            <person name="Muroi S."/>
            <person name="Akiyama K."/>
            <person name="Tezuka C."/>
            <person name="Okuda T."/>
            <person name="Taniuchi I."/>
        </authorList>
    </citation>
    <scope>FUNCTION</scope>
    <scope>MUTAGENESIS OF 447-VAL--TYR-451</scope>
</reference>
<reference key="15">
    <citation type="journal article" date="2013" name="EMBO J.">
        <title>Epigenetic Thpok silencing limits the time window to choose CD4(+) helper-lineage fate in the thymus.</title>
        <authorList>
            <person name="Tanaka H."/>
            <person name="Naito T."/>
            <person name="Muroi S."/>
            <person name="Seo W."/>
            <person name="Chihara R."/>
            <person name="Miyamoto C."/>
            <person name="Kominami R."/>
            <person name="Taniuchi I."/>
        </authorList>
    </citation>
    <scope>FUNCTION</scope>
    <scope>MUTAGENESIS OF 447-VAL--TYR-451</scope>
</reference>
<reference key="16">
    <citation type="journal article" date="2001" name="Acta Crystallogr. D">
        <title>Crystallization and preliminary X-ray analyses of quaternary, ternary and binary protein-DNA complexes with involvement of AML1/Runx-1/CBFalpha Runt domain, CBFbeta and the C/EBPbeta bZip region.</title>
        <authorList>
            <person name="Tahirov T.H."/>
            <person name="Inoue-Bungo T."/>
            <person name="Sasaki M."/>
            <person name="Shiina M."/>
            <person name="Kimura K."/>
            <person name="Sato K."/>
            <person name="Kumasaka T."/>
            <person name="Yamamoto M."/>
            <person name="Kamiya N."/>
            <person name="Ogata K."/>
        </authorList>
    </citation>
    <scope>X-RAY CRYSTALLOGRAPHY (2.65 ANGSTROMS) OF 62-177 IN COMPLEX WITH CEBPB; CBFB AND DNA</scope>
</reference>
<reference key="17">
    <citation type="journal article" date="2001" name="Cell">
        <title>Structural analyses of DNA recognition by the AML1/Runx-1 Runt domain and its allosteric control by CBFbeta.</title>
        <authorList>
            <person name="Tahirov T.H."/>
            <person name="Inoue-Bungo T."/>
            <person name="Morii H."/>
            <person name="Fujikawa A."/>
            <person name="Sasaki M."/>
            <person name="Kimura K."/>
            <person name="Shiina M."/>
            <person name="Sato K."/>
            <person name="Kumasaka T."/>
            <person name="Yamamoto M."/>
            <person name="Ishii S."/>
            <person name="Ogata K."/>
        </authorList>
    </citation>
    <scope>X-RAY CRYSTALLOGRAPHY (2.65 ANGSTROMS) OF 60-182 IN COMPLEX WITH CEBPB; CBFB AND DNA</scope>
    <scope>MUTAGENESIS OF ARG-80; ASN-109; TYR-113; ARG-142; LYS-144; THR-149; VAL-170; ASP-171; ARG-174 AND ARG-177</scope>
</reference>
<reference key="18">
    <citation type="journal article" date="2002" name="J. Mol. Biol.">
        <title>The RUNX1 Runt domain at 1.25A resolution: a structural switch and specifically bound chloride ions modulate DNA binding.</title>
        <authorList>
            <person name="Baeckstroem S."/>
            <person name="Wolf-Watz M."/>
            <person name="Grundstroem C."/>
            <person name="Haerd T."/>
            <person name="Grundstroem T."/>
            <person name="Sauer U.H."/>
        </authorList>
    </citation>
    <scope>X-RAY CRYSTALLOGRAPHY (1.25 ANGSTROMS) OF 60-173</scope>
</reference>
<name>RUNX1_MOUSE</name>
<gene>
    <name type="primary">Runx1</name>
    <name type="synonym">Aml1</name>
    <name type="synonym">Cbfa2</name>
    <name type="synonym">Pebp2ab</name>
</gene>
<protein>
    <recommendedName>
        <fullName>Runt-related transcription factor 1</fullName>
    </recommendedName>
    <alternativeName>
        <fullName>Acute myeloid leukemia 1 protein</fullName>
    </alternativeName>
    <alternativeName>
        <fullName>Core-binding factor subunit alpha-2</fullName>
        <shortName>CBF-alpha-2</shortName>
    </alternativeName>
    <alternativeName>
        <fullName>Oncogene AML-1</fullName>
    </alternativeName>
    <alternativeName>
        <fullName>Polyomavirus enhancer-binding protein 2 alpha B subunit</fullName>
        <shortName>PEA2-alpha B</shortName>
        <shortName>PEBP2-alpha B</shortName>
    </alternativeName>
    <alternativeName>
        <fullName>SL3-3 enhancer factor 1 alpha B subunit</fullName>
    </alternativeName>
    <alternativeName>
        <fullName>SL3/AKV core-binding factor alpha B subunit</fullName>
    </alternativeName>
</protein>
<organism>
    <name type="scientific">Mus musculus</name>
    <name type="common">Mouse</name>
    <dbReference type="NCBI Taxonomy" id="10090"/>
    <lineage>
        <taxon>Eukaryota</taxon>
        <taxon>Metazoa</taxon>
        <taxon>Chordata</taxon>
        <taxon>Craniata</taxon>
        <taxon>Vertebrata</taxon>
        <taxon>Euteleostomi</taxon>
        <taxon>Mammalia</taxon>
        <taxon>Eutheria</taxon>
        <taxon>Euarchontoglires</taxon>
        <taxon>Glires</taxon>
        <taxon>Rodentia</taxon>
        <taxon>Myomorpha</taxon>
        <taxon>Muroidea</taxon>
        <taxon>Muridae</taxon>
        <taxon>Murinae</taxon>
        <taxon>Mus</taxon>
        <taxon>Mus</taxon>
    </lineage>
</organism>
<accession>Q03347</accession>
<accession>O08598</accession>
<accession>Q62049</accession>
<accession>Q9ESB9</accession>
<accession>Q9ET65</accession>
<keyword id="KW-0002">3D-structure</keyword>
<keyword id="KW-0007">Acetylation</keyword>
<keyword id="KW-0010">Activator</keyword>
<keyword id="KW-0025">Alternative splicing</keyword>
<keyword id="KW-0238">DNA-binding</keyword>
<keyword id="KW-0488">Methylation</keyword>
<keyword id="KW-0539">Nucleus</keyword>
<keyword id="KW-0597">Phosphoprotein</keyword>
<keyword id="KW-1185">Reference proteome</keyword>
<keyword id="KW-0678">Repressor</keyword>
<keyword id="KW-0804">Transcription</keyword>
<keyword id="KW-0805">Transcription regulation</keyword>
<comment type="function">
    <text evidence="2 9 10 11 13 17">Forms the heterodimeric complex core-binding factor (CBF) with CBFB. RUNX members modulate the transcription of their target genes through recognizing the core consensus binding sequence 5'-TGTGGT-3', or very rarely, 5'-TGCGGT-3', within their regulatory regions via their runt domain, while CBFB is a non-DNA-binding regulatory subunit that allosterically enhances the sequence-specific DNA-binding capacity of RUNX. The heterodimers bind to the core site of a number of enhancers and promoters, including murine leukemia virus, polyomavirus enhancer, T-cell receptor enhancers, LCK, IL3 and GM-CSF promoters (Probable). Essential for the development of normal hematopoiesis. Acts synergistically with ELF4 to transactivate the IL-3 promoter and with ELF2 to transactivate the BLK promoter. Inhibits KAT6B-dependent transcriptional activation (By similarity). Involved in lineage commitment of immature T cell precursors. CBF complexes repress ZBTB7B transcription factor during cytotoxic (CD8+) T cell development. They bind to RUNX-binding sequence within the ZBTB7B locus acting as transcriptional silencer and allowing for cytotoxic T cell differentiation (PubMed:18258917). CBF complexes binding to the transcriptional silencer is essential for recruitment of nuclear protein complexes that catalyze epigenetic modifications to establish epigenetic ZBTB7B silencing (PubMed:23481257). Controls the anergy and suppressive function of regulatory T-cells (Treg) by associating with FOXP3. Activates the expression of IL2 and IFNG and down-regulates the expression of TNFRSF18, IL2RA and CTLA4, in conventional T-cells (PubMed:17377532). Positively regulates the expression of RORC in T-helper 17 cells (PubMed:21151104).</text>
</comment>
<comment type="function">
    <text evidence="5">Isoform 4 shows higher binding activities for target genes and binds TCR-beta-E2 and RAG-1 target site with threefold higher affinity than other isoforms. It is less effective in the context of neutrophil terminal differentiation.</text>
</comment>
<comment type="subunit">
    <text evidence="2 6 7 8 9 11 12">Heterodimer with CBFB. RUNX1 binds DNA as a monomer and through the Runt domain. DNA-binding is increased by heterodimerization. Interacts with TLE1 and ALYREF/THOC4. Interacts with HIPK2, ELF1, ELF2 and SPI1. Interacts via its Runt domain with the ELF4 N-terminal region. Interaction with ELF2 isoform 2 (NERF-1a) may act to repress RUNX1-mediated transactivation. Interacts with KAT6A and KAT6B. Interacts with SUV39H1, leading to abrogation of transactivating and DNA-binding properties of RUNX1 (By similarity). Interacts with YAP1. Interaction with CDK6 prevents myeloid differentiation, reducing its transcription transactivation activity (By similarity). Found in a complex with PRMT5, RUNX1 and CBFB. Interacts with FOXP3. Interacts with TBX21 (PubMed:21151104). Interacts with DPF2 (By similarity).</text>
</comment>
<comment type="interaction">
    <interactant intactId="EBI-3863873">
        <id>Q03347</id>
    </interactant>
    <interactant intactId="EBI-10956246">
        <id>Q99JB6</id>
        <label>Foxp3</label>
    </interactant>
    <organismsDiffer>false</organismsDiffer>
    <experiments>5</experiments>
</comment>
<comment type="interaction">
    <interactant intactId="EBI-3863873">
        <id>Q03347</id>
    </interactant>
    <interactant intactId="EBI-3863870">
        <id>Q9JKD8</id>
        <label>Tbx21</label>
    </interactant>
    <organismsDiffer>false</organismsDiffer>
    <experiments>3</experiments>
</comment>
<comment type="interaction">
    <interactant intactId="EBI-3863873">
        <id>Q03347</id>
    </interactant>
    <interactant intactId="EBI-15597718">
        <id>Q9JIZ5</id>
        <label>Tfap4</label>
    </interactant>
    <organismsDiffer>false</organismsDiffer>
    <experiments>2</experiments>
</comment>
<comment type="subcellular location">
    <subcellularLocation>
        <location evidence="9">Nucleus</location>
    </subcellularLocation>
</comment>
<comment type="alternative products">
    <event type="alternative splicing"/>
    <isoform>
        <id>Q03347-1</id>
        <name>1</name>
        <name>AML1-B</name>
        <name>PEB2-alpha B1</name>
        <sequence type="displayed"/>
    </isoform>
    <isoform>
        <id>Q03347-2</id>
        <name>2</name>
        <name>PEB2-alpha B2</name>
        <sequence type="described" ref="VSP_005932 VSP_005933"/>
    </isoform>
    <isoform>
        <id>Q03347-3</id>
        <name>3</name>
        <sequence type="described" ref="VSP_005931 VSP_005934"/>
    </isoform>
    <isoform>
        <id>Q03347-4</id>
        <name>4</name>
        <name>AML1-C</name>
        <sequence type="described" ref="VSP_005930"/>
    </isoform>
    <isoform>
        <id>Q03347-5</id>
        <name>5</name>
        <sequence type="described" ref="VSP_005935 VSP_005936"/>
    </isoform>
</comment>
<comment type="tissue specificity">
    <text>Isoform 4 is expressed at high levels in thymus, spleen and T-cell lines and at lower levels in myeloid cell lines and nonhematopoietic cells. Isoform 5 is expressed ubiquitously in lumbar vertebrae, brain, kidney, heart, muscle, ovary and osteoblast-like cell line MC3T3-E1.</text>
</comment>
<comment type="developmental stage">
    <text>Differentially expressed during hematopoietic differentiation. Isoform AML1-B is readily detectable in undifferentiated embryonic stem (es) cells and peak expression is seen on day 6 of differentiation, followed by a gradual decline thereafter. Isoform AML1-C is undetectable in undifferentiated es cells, but is gradually up-regulated along with differentiation and reaches its highest levels on day 8 and this expression is maintained through day 12. Isoform 5 is expressed at high levels at 6-8 dpc and then levels decrease on 12 dpc. Isoform 4 expression is high throughout T-cell development, declines with natural killer cell maturation, and appears to be transiently reduced and then restored during B-cell development.</text>
</comment>
<comment type="domain">
    <text>A proline/serine/threonine rich region at the C-terminus is necessary for transcriptional activation of target genes.</text>
</comment>
<comment type="PTM">
    <text evidence="1">Phosphorylated in its C-terminus upon IL-6 treatment. Phosphorylation enhances interaction with KAT6A (By similarity).</text>
</comment>
<comment type="PTM">
    <text evidence="1">Methylated.</text>
</comment>
<comment type="PTM">
    <text evidence="8">Phosphorylated in Ser-249 Thr-273 and Ser-276 by HIPK2 when associated with CBFB and DNA. This phosphorylation promotes subsequent EP300 phosphorylation.</text>
</comment>
<comment type="disease">
    <text evidence="14">Mice with an Runx1 lacking the DNA-binding region are found to die between embryonic days 11.5 to 12.5 due to hemorrhaging in the central nervous system. This hemorrhaging is preceded by necrosis and hematopoiesis is blocked (PubMed:8622955).</text>
</comment>
<feature type="chain" id="PRO_0000174656" description="Runt-related transcription factor 1">
    <location>
        <begin position="1"/>
        <end position="451"/>
    </location>
</feature>
<feature type="domain" description="Runt" evidence="3">
    <location>
        <begin position="50"/>
        <end position="178"/>
    </location>
</feature>
<feature type="region of interest" description="Disordered" evidence="4">
    <location>
        <begin position="1"/>
        <end position="37"/>
    </location>
</feature>
<feature type="region of interest" description="Interaction with DNA" evidence="1">
    <location>
        <begin position="80"/>
        <end position="84"/>
    </location>
</feature>
<feature type="region of interest" description="Interaction with DNA" evidence="1">
    <location>
        <begin position="135"/>
        <end position="143"/>
    </location>
</feature>
<feature type="region of interest" description="Interaction with DNA" evidence="1">
    <location>
        <begin position="168"/>
        <end position="177"/>
    </location>
</feature>
<feature type="region of interest" description="Disordered" evidence="4">
    <location>
        <begin position="170"/>
        <end position="195"/>
    </location>
</feature>
<feature type="region of interest" description="Disordered" evidence="4">
    <location>
        <begin position="209"/>
        <end position="252"/>
    </location>
</feature>
<feature type="region of interest" description="Disordered" evidence="4">
    <location>
        <begin position="268"/>
        <end position="290"/>
    </location>
</feature>
<feature type="region of interest" description="Interaction with KAT6A" evidence="1">
    <location>
        <begin position="291"/>
        <end position="370"/>
    </location>
</feature>
<feature type="region of interest" description="Interaction with KAT6B" evidence="1">
    <location>
        <begin position="307"/>
        <end position="399"/>
    </location>
</feature>
<feature type="region of interest" description="Interaction with FOXP3" evidence="9">
    <location>
        <begin position="361"/>
        <end position="401"/>
    </location>
</feature>
<feature type="region of interest" description="Disordered" evidence="4">
    <location>
        <begin position="406"/>
        <end position="451"/>
    </location>
</feature>
<feature type="compositionally biased region" description="Polar residues" evidence="4">
    <location>
        <begin position="7"/>
        <end position="20"/>
    </location>
</feature>
<feature type="compositionally biased region" description="Polar residues" evidence="4">
    <location>
        <begin position="222"/>
        <end position="247"/>
    </location>
</feature>
<feature type="compositionally biased region" description="Polar residues" evidence="4">
    <location>
        <begin position="417"/>
        <end position="436"/>
    </location>
</feature>
<feature type="compositionally biased region" description="Basic and acidic residues" evidence="4">
    <location>
        <begin position="442"/>
        <end position="451"/>
    </location>
</feature>
<feature type="binding site" evidence="3">
    <location>
        <position position="112"/>
    </location>
    <ligand>
        <name>chloride</name>
        <dbReference type="ChEBI" id="CHEBI:17996"/>
        <label>1</label>
    </ligand>
</feature>
<feature type="binding site" evidence="3">
    <location>
        <position position="116"/>
    </location>
    <ligand>
        <name>chloride</name>
        <dbReference type="ChEBI" id="CHEBI:17996"/>
        <label>1</label>
    </ligand>
</feature>
<feature type="binding site" evidence="3">
    <location>
        <position position="139"/>
    </location>
    <ligand>
        <name>chloride</name>
        <dbReference type="ChEBI" id="CHEBI:17996"/>
        <label>2</label>
    </ligand>
</feature>
<feature type="binding site" evidence="3">
    <location>
        <position position="170"/>
    </location>
    <ligand>
        <name>chloride</name>
        <dbReference type="ChEBI" id="CHEBI:17996"/>
        <label>2</label>
    </ligand>
</feature>
<feature type="modified residue" description="Phosphothreonine" evidence="2">
    <location>
        <position position="14"/>
    </location>
</feature>
<feature type="modified residue" description="Phosphoserine" evidence="2">
    <location>
        <position position="21"/>
    </location>
</feature>
<feature type="modified residue" description="N6-acetyllysine" evidence="2">
    <location>
        <position position="24"/>
    </location>
</feature>
<feature type="modified residue" description="N6-acetyllysine" evidence="2">
    <location>
        <position position="43"/>
    </location>
</feature>
<feature type="modified residue" description="Phosphoserine" evidence="2">
    <location>
        <position position="193"/>
    </location>
</feature>
<feature type="modified residue" description="Phosphoserine" evidence="2">
    <location>
        <position position="212"/>
    </location>
</feature>
<feature type="modified residue" description="Phosphoserine; by HIPK2" evidence="8">
    <location>
        <position position="249"/>
    </location>
</feature>
<feature type="modified residue" description="Phosphoserine" evidence="2">
    <location>
        <position position="266"/>
    </location>
</feature>
<feature type="modified residue" description="Phosphoserine" evidence="2">
    <location>
        <position position="268"/>
    </location>
</feature>
<feature type="modified residue" description="Phosphothreonine; by HIPK2" evidence="2">
    <location>
        <position position="273"/>
    </location>
</feature>
<feature type="modified residue" description="Phosphoserine; by HIPK2" evidence="8">
    <location>
        <position position="276"/>
    </location>
</feature>
<feature type="modified residue" description="Phosphothreonine" evidence="2">
    <location>
        <position position="296"/>
    </location>
</feature>
<feature type="modified residue" description="Phosphoserine" evidence="2">
    <location>
        <position position="434"/>
    </location>
</feature>
<feature type="splice variant" id="VSP_005930" description="In isoform 4." evidence="17">
    <original>MRIPV</original>
    <variation>MASDSIFESFPSYPQCFMR</variation>
    <location>
        <begin position="1"/>
        <end position="5"/>
    </location>
</feature>
<feature type="splice variant" id="VSP_005931" description="In isoform 3." evidence="16">
    <original>VALGDVPDGTLVTVMAGNDENYSAELRNATAAMKNQVARFNDLRFVGRSGRGKSFTLTITVFTNPPQVATYHRAIKITVDGPREPRRHRQK</original>
    <variation>LLPEEGGGRSRWRSADGQSEPRGQRLRRLLKGAACSRSLWSFSLSLGWGGDAALPWRPSGGSASEVSKREFF</variation>
    <location>
        <begin position="92"/>
        <end position="182"/>
    </location>
</feature>
<feature type="splice variant" id="VSP_005932" description="In isoform 2." evidence="15">
    <original>R</original>
    <variation>N</variation>
    <location>
        <position position="178"/>
    </location>
</feature>
<feature type="splice variant" id="VSP_005933" description="In isoform 2." evidence="15">
    <location>
        <begin position="179"/>
        <end position="242"/>
    </location>
</feature>
<feature type="splice variant" id="VSP_005934" description="In isoform 3." evidence="16">
    <location>
        <begin position="183"/>
        <end position="451"/>
    </location>
</feature>
<feature type="splice variant" id="VSP_005935" description="In isoform 5." evidence="17">
    <original>DARQIQPSPPWSYDQSYQYLGSITSSSVHPATPISPGRASGMTSLSAELSSRLSTAPDLTAF</original>
    <variation>KNPTEPTTLCLCWSPRRRKHRGCQAFLGALRELLKPRSISWEPNEENAVPSAEYLYSEKCGC</variation>
    <location>
        <begin position="242"/>
        <end position="303"/>
    </location>
</feature>
<feature type="splice variant" id="VSP_005936" description="In isoform 5." evidence="17">
    <location>
        <begin position="304"/>
        <end position="451"/>
    </location>
</feature>
<feature type="mutagenesis site" description="Interferes with DNA-binding." evidence="6">
    <original>R</original>
    <variation>A</variation>
    <location>
        <position position="80"/>
    </location>
</feature>
<feature type="mutagenesis site" description="Interferes with heterodimerization." evidence="6">
    <original>N</original>
    <variation>A</variation>
    <location>
        <position position="109"/>
    </location>
</feature>
<feature type="mutagenesis site" description="Interferes with heterodimerization." evidence="6">
    <original>Y</original>
    <variation>A</variation>
    <location>
        <position position="113"/>
    </location>
</feature>
<feature type="mutagenesis site" description="Interferes with DNA-binding." evidence="6">
    <original>R</original>
    <variation>A</variation>
    <location>
        <position position="142"/>
    </location>
</feature>
<feature type="mutagenesis site" description="Interferes with DNA-binding." evidence="6">
    <original>K</original>
    <variation>M</variation>
    <location>
        <position position="144"/>
    </location>
</feature>
<feature type="mutagenesis site" description="Interferes with heterodimerization." evidence="6">
    <original>T</original>
    <variation>A</variation>
    <location>
        <position position="149"/>
    </location>
</feature>
<feature type="mutagenesis site" description="No effect." evidence="6">
    <original>V</original>
    <variation>A</variation>
    <location>
        <position position="170"/>
    </location>
</feature>
<feature type="mutagenesis site" description="Interferes with DNA-binding." evidence="6">
    <original>D</original>
    <variation>A</variation>
    <location>
        <position position="171"/>
    </location>
</feature>
<feature type="mutagenesis site" description="Interferes with DNA-binding." evidence="6">
    <original>R</original>
    <variation>A</variation>
    <location>
        <position position="174"/>
    </location>
</feature>
<feature type="mutagenesis site" description="Interferes with DNA-binding." evidence="6">
    <original>R</original>
    <variation>A</variation>
    <location>
        <position position="177"/>
    </location>
</feature>
<feature type="mutagenesis site" description="Reduced phosphorylation." evidence="8">
    <original>S</original>
    <variation>A</variation>
    <location>
        <position position="249"/>
    </location>
</feature>
<feature type="mutagenesis site" description="Reduced phosphorylation." evidence="8">
    <original>S</original>
    <variation>A</variation>
    <location>
        <position position="276"/>
    </location>
</feature>
<feature type="mutagenesis site" description="Inhibits repression of ZBTB7B expression." evidence="10 13">
    <location>
        <begin position="447"/>
        <end position="451"/>
    </location>
</feature>
<feature type="sequence conflict" description="In Ref. 3; CAA65976." evidence="17" ref="3">
    <original>GP</original>
    <variation>A</variation>
    <location>
        <begin position="37"/>
        <end position="38"/>
    </location>
</feature>
<feature type="helix" evidence="18">
    <location>
        <begin position="51"/>
        <end position="57"/>
    </location>
</feature>
<feature type="turn" evidence="18">
    <location>
        <begin position="59"/>
        <end position="61"/>
    </location>
</feature>
<feature type="strand" evidence="20">
    <location>
        <begin position="62"/>
        <end position="64"/>
    </location>
</feature>
<feature type="strand" evidence="18">
    <location>
        <begin position="70"/>
        <end position="72"/>
    </location>
</feature>
<feature type="strand" evidence="18">
    <location>
        <begin position="77"/>
        <end position="80"/>
    </location>
</feature>
<feature type="strand" evidence="18">
    <location>
        <begin position="90"/>
        <end position="95"/>
    </location>
</feature>
<feature type="strand" evidence="18">
    <location>
        <begin position="102"/>
        <end position="109"/>
    </location>
</feature>
<feature type="strand" evidence="18">
    <location>
        <begin position="112"/>
        <end position="115"/>
    </location>
</feature>
<feature type="strand" evidence="18">
    <location>
        <begin position="117"/>
        <end position="119"/>
    </location>
</feature>
<feature type="strand" evidence="18">
    <location>
        <begin position="121"/>
        <end position="125"/>
    </location>
</feature>
<feature type="strand" evidence="18">
    <location>
        <begin position="128"/>
        <end position="130"/>
    </location>
</feature>
<feature type="strand" evidence="18">
    <location>
        <begin position="146"/>
        <end position="152"/>
    </location>
</feature>
<feature type="strand" evidence="18">
    <location>
        <begin position="154"/>
        <end position="156"/>
    </location>
</feature>
<feature type="strand" evidence="18">
    <location>
        <begin position="158"/>
        <end position="161"/>
    </location>
</feature>
<feature type="strand" evidence="18">
    <location>
        <begin position="166"/>
        <end position="171"/>
    </location>
</feature>
<feature type="helix" evidence="20">
    <location>
        <begin position="194"/>
        <end position="203"/>
    </location>
</feature>
<feature type="helix" evidence="19">
    <location>
        <begin position="205"/>
        <end position="210"/>
    </location>
</feature>
<proteinExistence type="evidence at protein level"/>
<evidence type="ECO:0000250" key="1"/>
<evidence type="ECO:0000250" key="2">
    <source>
        <dbReference type="UniProtKB" id="Q01196"/>
    </source>
</evidence>
<evidence type="ECO:0000255" key="3">
    <source>
        <dbReference type="PROSITE-ProRule" id="PRU00399"/>
    </source>
</evidence>
<evidence type="ECO:0000256" key="4">
    <source>
        <dbReference type="SAM" id="MobiDB-lite"/>
    </source>
</evidence>
<evidence type="ECO:0000269" key="5">
    <source>
    </source>
</evidence>
<evidence type="ECO:0000269" key="6">
    <source>
    </source>
</evidence>
<evidence type="ECO:0000269" key="7">
    <source>
    </source>
</evidence>
<evidence type="ECO:0000269" key="8">
    <source>
    </source>
</evidence>
<evidence type="ECO:0000269" key="9">
    <source>
    </source>
</evidence>
<evidence type="ECO:0000269" key="10">
    <source>
    </source>
</evidence>
<evidence type="ECO:0000269" key="11">
    <source>
    </source>
</evidence>
<evidence type="ECO:0000269" key="12">
    <source>
    </source>
</evidence>
<evidence type="ECO:0000269" key="13">
    <source>
    </source>
</evidence>
<evidence type="ECO:0000269" key="14">
    <source>
    </source>
</evidence>
<evidence type="ECO:0000303" key="15">
    <source>
    </source>
</evidence>
<evidence type="ECO:0000303" key="16">
    <source ref="3"/>
</evidence>
<evidence type="ECO:0000305" key="17"/>
<evidence type="ECO:0007829" key="18">
    <source>
        <dbReference type="PDB" id="1EAQ"/>
    </source>
</evidence>
<evidence type="ECO:0007829" key="19">
    <source>
        <dbReference type="PDB" id="4L0Z"/>
    </source>
</evidence>
<evidence type="ECO:0007829" key="20">
    <source>
        <dbReference type="PDB" id="4L18"/>
    </source>
</evidence>
<sequence>MRIPVDASTSRRFTPPSTALSPGKMSEALPLGAPDGGPALASKLRSGDRSMVEVLADHPGELVRTDSPNFLCSVLPTHWRCNKTLPIAFKVVALGDVPDGTLVTVMAGNDENYSAELRNATAAMKNQVARFNDLRFVGRSGRGKSFTLTITVFTNPPQVATYHRAIKITVDGPREPRRHRQKLDDQTKPGSLSFSERLSELEQLRRTAMRVSPHHPAPTPNPRASLNHSTAFNPQPQSQMQDARQIQPSPPWSYDQSYQYLGSITSSSVHPATPISPGRASGMTSLSAELSSRLSTAPDLTAFGDPRQFPTLPSISDPRMHYPGAFTYSPPVTSGIGIGMSAMSSASRYHTYLPPPYPGSSQAQAGPFQTGSPSYHLYYGASAGSYQFSMVGGERSPPRILPPCTNASTGAALLNPSLPSQSDVVETEGSHSNSPTNMPPARLEEAVWRPY</sequence>